<gene>
    <name evidence="1" type="primary">trpA</name>
    <name type="ordered locus">MJ1038</name>
</gene>
<comment type="function">
    <text evidence="1">The alpha subunit is responsible for the aldol cleavage of indoleglycerol phosphate to indole and glyceraldehyde 3-phosphate.</text>
</comment>
<comment type="catalytic activity">
    <reaction evidence="1">
        <text>(1S,2R)-1-C-(indol-3-yl)glycerol 3-phosphate + L-serine = D-glyceraldehyde 3-phosphate + L-tryptophan + H2O</text>
        <dbReference type="Rhea" id="RHEA:10532"/>
        <dbReference type="ChEBI" id="CHEBI:15377"/>
        <dbReference type="ChEBI" id="CHEBI:33384"/>
        <dbReference type="ChEBI" id="CHEBI:57912"/>
        <dbReference type="ChEBI" id="CHEBI:58866"/>
        <dbReference type="ChEBI" id="CHEBI:59776"/>
        <dbReference type="EC" id="4.2.1.20"/>
    </reaction>
</comment>
<comment type="pathway">
    <text evidence="1">Amino-acid biosynthesis; L-tryptophan biosynthesis; L-tryptophan from chorismate: step 5/5.</text>
</comment>
<comment type="subunit">
    <text evidence="1">Tetramer of two alpha and two beta chains.</text>
</comment>
<comment type="similarity">
    <text evidence="1">Belongs to the TrpA family.</text>
</comment>
<comment type="sequence caution" evidence="2">
    <conflict type="erroneous initiation">
        <sequence resource="EMBL-CDS" id="AAB99041"/>
    </conflict>
</comment>
<keyword id="KW-0028">Amino-acid biosynthesis</keyword>
<keyword id="KW-0057">Aromatic amino acid biosynthesis</keyword>
<keyword id="KW-0456">Lyase</keyword>
<keyword id="KW-1185">Reference proteome</keyword>
<keyword id="KW-0822">Tryptophan biosynthesis</keyword>
<protein>
    <recommendedName>
        <fullName evidence="1">Tryptophan synthase alpha chain</fullName>
        <ecNumber evidence="1">4.2.1.20</ecNumber>
    </recommendedName>
</protein>
<proteinExistence type="inferred from homology"/>
<sequence length="281" mass="31271">MIMKLAEKFEELKNKGEKAFVAFYVGGDPNLEISEKALEVICKHADIVEIGIPFSDPVADGITIQKADVRALNSGMNPLKAFELAKKLNEKAPNVPKVFLTYYNIIFKMGEEEFVKKCKEAGVSGIIVPDLPIEEADSLYNYCKKYGVDLIFLVAPTTPDERLKKILEKCSGFVYVVSVTGITGAREKVAEETKELIKRVKKFSKIPACVGFGISKREHVEEITEIADGAIVGSAIVKIVEKHLDENGQIKDEEKFLKELEEFVKNLKEGTKKKAKVAIKN</sequence>
<reference key="1">
    <citation type="journal article" date="1996" name="Science">
        <title>Complete genome sequence of the methanogenic archaeon, Methanococcus jannaschii.</title>
        <authorList>
            <person name="Bult C.J."/>
            <person name="White O."/>
            <person name="Olsen G.J."/>
            <person name="Zhou L."/>
            <person name="Fleischmann R.D."/>
            <person name="Sutton G.G."/>
            <person name="Blake J.A."/>
            <person name="FitzGerald L.M."/>
            <person name="Clayton R.A."/>
            <person name="Gocayne J.D."/>
            <person name="Kerlavage A.R."/>
            <person name="Dougherty B.A."/>
            <person name="Tomb J.-F."/>
            <person name="Adams M.D."/>
            <person name="Reich C.I."/>
            <person name="Overbeek R."/>
            <person name="Kirkness E.F."/>
            <person name="Weinstock K.G."/>
            <person name="Merrick J.M."/>
            <person name="Glodek A."/>
            <person name="Scott J.L."/>
            <person name="Geoghagen N.S.M."/>
            <person name="Weidman J.F."/>
            <person name="Fuhrmann J.L."/>
            <person name="Nguyen D."/>
            <person name="Utterback T.R."/>
            <person name="Kelley J.M."/>
            <person name="Peterson J.D."/>
            <person name="Sadow P.W."/>
            <person name="Hanna M.C."/>
            <person name="Cotton M.D."/>
            <person name="Roberts K.M."/>
            <person name="Hurst M.A."/>
            <person name="Kaine B.P."/>
            <person name="Borodovsky M."/>
            <person name="Klenk H.-P."/>
            <person name="Fraser C.M."/>
            <person name="Smith H.O."/>
            <person name="Woese C.R."/>
            <person name="Venter J.C."/>
        </authorList>
    </citation>
    <scope>NUCLEOTIDE SEQUENCE [LARGE SCALE GENOMIC DNA]</scope>
    <source>
        <strain>ATCC 43067 / DSM 2661 / JAL-1 / JCM 10045 / NBRC 100440</strain>
    </source>
</reference>
<organism>
    <name type="scientific">Methanocaldococcus jannaschii (strain ATCC 43067 / DSM 2661 / JAL-1 / JCM 10045 / NBRC 100440)</name>
    <name type="common">Methanococcus jannaschii</name>
    <dbReference type="NCBI Taxonomy" id="243232"/>
    <lineage>
        <taxon>Archaea</taxon>
        <taxon>Methanobacteriati</taxon>
        <taxon>Methanobacteriota</taxon>
        <taxon>Methanomada group</taxon>
        <taxon>Methanococci</taxon>
        <taxon>Methanococcales</taxon>
        <taxon>Methanocaldococcaceae</taxon>
        <taxon>Methanocaldococcus</taxon>
    </lineage>
</organism>
<evidence type="ECO:0000255" key="1">
    <source>
        <dbReference type="HAMAP-Rule" id="MF_00131"/>
    </source>
</evidence>
<evidence type="ECO:0000305" key="2"/>
<name>TRPA_METJA</name>
<accession>Q60180</accession>
<dbReference type="EC" id="4.2.1.20" evidence="1"/>
<dbReference type="EMBL" id="L77117">
    <property type="protein sequence ID" value="AAB99041.1"/>
    <property type="status" value="ALT_INIT"/>
    <property type="molecule type" value="Genomic_DNA"/>
</dbReference>
<dbReference type="PIR" id="E64429">
    <property type="entry name" value="E64429"/>
</dbReference>
<dbReference type="SMR" id="Q60180"/>
<dbReference type="FunCoup" id="Q60180">
    <property type="interactions" value="110"/>
</dbReference>
<dbReference type="STRING" id="243232.MJ_1038"/>
<dbReference type="PaxDb" id="243232-MJ_1038"/>
<dbReference type="EnsemblBacteria" id="AAB99041">
    <property type="protein sequence ID" value="AAB99041"/>
    <property type="gene ID" value="MJ_1038"/>
</dbReference>
<dbReference type="KEGG" id="mja:MJ_1038"/>
<dbReference type="eggNOG" id="arCOG01086">
    <property type="taxonomic scope" value="Archaea"/>
</dbReference>
<dbReference type="HOGENOM" id="CLU_016734_0_2_2"/>
<dbReference type="InParanoid" id="Q60180"/>
<dbReference type="PhylomeDB" id="Q60180"/>
<dbReference type="UniPathway" id="UPA00035">
    <property type="reaction ID" value="UER00044"/>
</dbReference>
<dbReference type="Proteomes" id="UP000000805">
    <property type="component" value="Chromosome"/>
</dbReference>
<dbReference type="GO" id="GO:0005829">
    <property type="term" value="C:cytosol"/>
    <property type="evidence" value="ECO:0000318"/>
    <property type="project" value="GO_Central"/>
</dbReference>
<dbReference type="GO" id="GO:0004834">
    <property type="term" value="F:tryptophan synthase activity"/>
    <property type="evidence" value="ECO:0000318"/>
    <property type="project" value="GO_Central"/>
</dbReference>
<dbReference type="GO" id="GO:0000162">
    <property type="term" value="P:L-tryptophan biosynthetic process"/>
    <property type="evidence" value="ECO:0000318"/>
    <property type="project" value="GO_Central"/>
</dbReference>
<dbReference type="CDD" id="cd04724">
    <property type="entry name" value="Tryptophan_synthase_alpha"/>
    <property type="match status" value="1"/>
</dbReference>
<dbReference type="FunFam" id="3.20.20.70:FF:000037">
    <property type="entry name" value="Tryptophan synthase alpha chain"/>
    <property type="match status" value="1"/>
</dbReference>
<dbReference type="Gene3D" id="3.20.20.70">
    <property type="entry name" value="Aldolase class I"/>
    <property type="match status" value="1"/>
</dbReference>
<dbReference type="HAMAP" id="MF_00131">
    <property type="entry name" value="Trp_synth_alpha"/>
    <property type="match status" value="1"/>
</dbReference>
<dbReference type="InterPro" id="IPR013785">
    <property type="entry name" value="Aldolase_TIM"/>
</dbReference>
<dbReference type="InterPro" id="IPR011060">
    <property type="entry name" value="RibuloseP-bd_barrel"/>
</dbReference>
<dbReference type="InterPro" id="IPR018204">
    <property type="entry name" value="Trp_synthase_alpha_AS"/>
</dbReference>
<dbReference type="InterPro" id="IPR002028">
    <property type="entry name" value="Trp_synthase_suA"/>
</dbReference>
<dbReference type="NCBIfam" id="TIGR00262">
    <property type="entry name" value="trpA"/>
    <property type="match status" value="1"/>
</dbReference>
<dbReference type="PANTHER" id="PTHR43406:SF1">
    <property type="entry name" value="TRYPTOPHAN SYNTHASE ALPHA CHAIN, CHLOROPLASTIC"/>
    <property type="match status" value="1"/>
</dbReference>
<dbReference type="PANTHER" id="PTHR43406">
    <property type="entry name" value="TRYPTOPHAN SYNTHASE, ALPHA CHAIN"/>
    <property type="match status" value="1"/>
</dbReference>
<dbReference type="Pfam" id="PF00290">
    <property type="entry name" value="Trp_syntA"/>
    <property type="match status" value="1"/>
</dbReference>
<dbReference type="SUPFAM" id="SSF51366">
    <property type="entry name" value="Ribulose-phoshate binding barrel"/>
    <property type="match status" value="1"/>
</dbReference>
<dbReference type="PROSITE" id="PS00167">
    <property type="entry name" value="TRP_SYNTHASE_ALPHA"/>
    <property type="match status" value="1"/>
</dbReference>
<feature type="chain" id="PRO_0000098889" description="Tryptophan synthase alpha chain">
    <location>
        <begin position="1"/>
        <end position="281"/>
    </location>
</feature>
<feature type="active site" description="Proton acceptor" evidence="1">
    <location>
        <position position="49"/>
    </location>
</feature>
<feature type="active site" description="Proton acceptor" evidence="1">
    <location>
        <position position="60"/>
    </location>
</feature>